<proteinExistence type="inferred from homology"/>
<name>PSAE_PROM5</name>
<feature type="chain" id="PRO_1000061306" description="Photosystem I reaction center subunit IV">
    <location>
        <begin position="1"/>
        <end position="69"/>
    </location>
</feature>
<keyword id="KW-0472">Membrane</keyword>
<keyword id="KW-0602">Photosynthesis</keyword>
<keyword id="KW-0603">Photosystem I</keyword>
<keyword id="KW-0793">Thylakoid</keyword>
<reference key="1">
    <citation type="journal article" date="2007" name="PLoS Genet.">
        <title>Patterns and implications of gene gain and loss in the evolution of Prochlorococcus.</title>
        <authorList>
            <person name="Kettler G.C."/>
            <person name="Martiny A.C."/>
            <person name="Huang K."/>
            <person name="Zucker J."/>
            <person name="Coleman M.L."/>
            <person name="Rodrigue S."/>
            <person name="Chen F."/>
            <person name="Lapidus A."/>
            <person name="Ferriera S."/>
            <person name="Johnson J."/>
            <person name="Steglich C."/>
            <person name="Church G.M."/>
            <person name="Richardson P."/>
            <person name="Chisholm S.W."/>
        </authorList>
    </citation>
    <scope>NUCLEOTIDE SEQUENCE [LARGE SCALE GENOMIC DNA]</scope>
    <source>
        <strain>MIT 9515</strain>
    </source>
</reference>
<accession>A2BUV9</accession>
<evidence type="ECO:0000255" key="1">
    <source>
        <dbReference type="HAMAP-Rule" id="MF_00613"/>
    </source>
</evidence>
<organism>
    <name type="scientific">Prochlorococcus marinus (strain MIT 9515)</name>
    <dbReference type="NCBI Taxonomy" id="167542"/>
    <lineage>
        <taxon>Bacteria</taxon>
        <taxon>Bacillati</taxon>
        <taxon>Cyanobacteriota</taxon>
        <taxon>Cyanophyceae</taxon>
        <taxon>Synechococcales</taxon>
        <taxon>Prochlorococcaceae</taxon>
        <taxon>Prochlorococcus</taxon>
    </lineage>
</organism>
<protein>
    <recommendedName>
        <fullName evidence="1">Photosystem I reaction center subunit IV</fullName>
    </recommendedName>
</protein>
<dbReference type="EMBL" id="CP000552">
    <property type="protein sequence ID" value="ABM71570.1"/>
    <property type="molecule type" value="Genomic_DNA"/>
</dbReference>
<dbReference type="RefSeq" id="WP_011819678.1">
    <property type="nucleotide sequence ID" value="NC_008817.1"/>
</dbReference>
<dbReference type="SMR" id="A2BUV9"/>
<dbReference type="STRING" id="167542.P9515_03611"/>
<dbReference type="GeneID" id="60200470"/>
<dbReference type="KEGG" id="pmc:P9515_03611"/>
<dbReference type="HOGENOM" id="CLU_136462_2_1_3"/>
<dbReference type="OrthoDB" id="427926at2"/>
<dbReference type="Proteomes" id="UP000001589">
    <property type="component" value="Chromosome"/>
</dbReference>
<dbReference type="GO" id="GO:0009538">
    <property type="term" value="C:photosystem I reaction center"/>
    <property type="evidence" value="ECO:0007669"/>
    <property type="project" value="InterPro"/>
</dbReference>
<dbReference type="GO" id="GO:0031676">
    <property type="term" value="C:plasma membrane-derived thylakoid membrane"/>
    <property type="evidence" value="ECO:0007669"/>
    <property type="project" value="UniProtKB-SubCell"/>
</dbReference>
<dbReference type="GO" id="GO:0015979">
    <property type="term" value="P:photosynthesis"/>
    <property type="evidence" value="ECO:0007669"/>
    <property type="project" value="UniProtKB-UniRule"/>
</dbReference>
<dbReference type="Gene3D" id="2.30.30.50">
    <property type="match status" value="1"/>
</dbReference>
<dbReference type="HAMAP" id="MF_00613">
    <property type="entry name" value="PSI_PsaE"/>
    <property type="match status" value="1"/>
</dbReference>
<dbReference type="InterPro" id="IPR008990">
    <property type="entry name" value="Elect_transpt_acc-like_dom_sf"/>
</dbReference>
<dbReference type="InterPro" id="IPR003375">
    <property type="entry name" value="PSI_PsaE"/>
</dbReference>
<dbReference type="NCBIfam" id="NF002745">
    <property type="entry name" value="PRK02749.1"/>
    <property type="match status" value="1"/>
</dbReference>
<dbReference type="PANTHER" id="PTHR34549">
    <property type="entry name" value="PHOTOSYSTEM I REACTION CENTER SUBUNIT IV A, CHLOROPLASTIC-RELATED"/>
    <property type="match status" value="1"/>
</dbReference>
<dbReference type="PANTHER" id="PTHR34549:SF2">
    <property type="entry name" value="PHOTOSYSTEM I SUBUNIT IV"/>
    <property type="match status" value="1"/>
</dbReference>
<dbReference type="Pfam" id="PF02427">
    <property type="entry name" value="PSI_PsaE"/>
    <property type="match status" value="1"/>
</dbReference>
<dbReference type="SUPFAM" id="SSF50090">
    <property type="entry name" value="Electron transport accessory proteins"/>
    <property type="match status" value="1"/>
</dbReference>
<comment type="function">
    <text evidence="1">Stabilizes the interaction between PsaC and the PSI core, assists the docking of the ferredoxin to PSI and interacts with ferredoxin-NADP oxidoreductase.</text>
</comment>
<comment type="subcellular location">
    <subcellularLocation>
        <location evidence="1">Cellular thylakoid membrane</location>
        <topology evidence="1">Peripheral membrane protein</topology>
    </subcellularLocation>
</comment>
<comment type="similarity">
    <text evidence="1">Belongs to the PsaE family.</text>
</comment>
<gene>
    <name evidence="1" type="primary">psaE</name>
    <name type="ordered locus">P9515_03611</name>
</gene>
<sequence>MTIARGDFVRIKRKESYWYNDTGKVASIDKSGIKYNVTVKFDRVNFYGISGTDGGNVTNNFAEVELEKI</sequence>